<accession>Q40004</accession>
<comment type="function">
    <text evidence="1">RuBisCO catalyzes two reactions: the carboxylation of D-ribulose 1,5-bisphosphate, the primary event in carbon dioxide fixation, as well as the oxidative fragmentation of the pentose substrate. Both reactions occur simultaneously and in competition at the same active site. Although the small subunit is not catalytic it is essential for maximal activity.</text>
</comment>
<comment type="subunit">
    <text evidence="1">Heterohexadecamer of 8 large and 8 small subunits.</text>
</comment>
<comment type="subcellular location">
    <subcellularLocation>
        <location evidence="1">Plastid</location>
        <location evidence="1">Chloroplast</location>
    </subcellularLocation>
</comment>
<comment type="miscellaneous">
    <text evidence="1">The basic functional RuBisCO is composed of a large chain homodimer in a 'head-to-tail' conformation. In form I RuBisCO this homodimer is arranged in a barrel-like tetramer with the small subunits forming a tetrameric 'cap' on each end of the 'barrel'.</text>
</comment>
<comment type="similarity">
    <text evidence="1">Belongs to the RuBisCO small chain family.</text>
</comment>
<organism>
    <name type="scientific">Hordeum vulgare</name>
    <name type="common">Barley</name>
    <dbReference type="NCBI Taxonomy" id="4513"/>
    <lineage>
        <taxon>Eukaryota</taxon>
        <taxon>Viridiplantae</taxon>
        <taxon>Streptophyta</taxon>
        <taxon>Embryophyta</taxon>
        <taxon>Tracheophyta</taxon>
        <taxon>Spermatophyta</taxon>
        <taxon>Magnoliopsida</taxon>
        <taxon>Liliopsida</taxon>
        <taxon>Poales</taxon>
        <taxon>Poaceae</taxon>
        <taxon>BOP clade</taxon>
        <taxon>Pooideae</taxon>
        <taxon>Triticodae</taxon>
        <taxon>Triticeae</taxon>
        <taxon>Hordeinae</taxon>
        <taxon>Hordeum</taxon>
    </lineage>
</organism>
<dbReference type="EMBL" id="U43493">
    <property type="protein sequence ID" value="AAA87039.1"/>
    <property type="molecule type" value="mRNA"/>
</dbReference>
<dbReference type="SMR" id="Q40004"/>
<dbReference type="ExpressionAtlas" id="Q40004">
    <property type="expression patterns" value="baseline"/>
</dbReference>
<dbReference type="GO" id="GO:0009507">
    <property type="term" value="C:chloroplast"/>
    <property type="evidence" value="ECO:0007669"/>
    <property type="project" value="UniProtKB-SubCell"/>
</dbReference>
<dbReference type="GO" id="GO:0016984">
    <property type="term" value="F:ribulose-bisphosphate carboxylase activity"/>
    <property type="evidence" value="ECO:0007669"/>
    <property type="project" value="UniProtKB-UniRule"/>
</dbReference>
<dbReference type="GO" id="GO:0009853">
    <property type="term" value="P:photorespiration"/>
    <property type="evidence" value="ECO:0007669"/>
    <property type="project" value="UniProtKB-KW"/>
</dbReference>
<dbReference type="GO" id="GO:0019253">
    <property type="term" value="P:reductive pentose-phosphate cycle"/>
    <property type="evidence" value="ECO:0007669"/>
    <property type="project" value="UniProtKB-UniRule"/>
</dbReference>
<dbReference type="CDD" id="cd03527">
    <property type="entry name" value="RuBisCO_small"/>
    <property type="match status" value="1"/>
</dbReference>
<dbReference type="FunFam" id="3.30.190.10:FF:000001">
    <property type="entry name" value="Ribulose bisphosphate carboxylase small chain, chloroplastic"/>
    <property type="match status" value="1"/>
</dbReference>
<dbReference type="Gene3D" id="3.30.190.10">
    <property type="entry name" value="Ribulose bisphosphate carboxylase, small subunit"/>
    <property type="match status" value="1"/>
</dbReference>
<dbReference type="HAMAP" id="MF_00859">
    <property type="entry name" value="RuBisCO_S_bact"/>
    <property type="match status" value="1"/>
</dbReference>
<dbReference type="InterPro" id="IPR024681">
    <property type="entry name" value="RuBisCO_ssu"/>
</dbReference>
<dbReference type="InterPro" id="IPR000894">
    <property type="entry name" value="RuBisCO_ssu_dom"/>
</dbReference>
<dbReference type="InterPro" id="IPR024680">
    <property type="entry name" value="RuBisCO_ssu_N"/>
</dbReference>
<dbReference type="InterPro" id="IPR036385">
    <property type="entry name" value="RuBisCO_ssu_sf"/>
</dbReference>
<dbReference type="PANTHER" id="PTHR31262">
    <property type="entry name" value="RIBULOSE BISPHOSPHATE CARBOXYLASE SMALL CHAIN 1, CHLOROPLASTIC"/>
    <property type="match status" value="1"/>
</dbReference>
<dbReference type="PANTHER" id="PTHR31262:SF10">
    <property type="entry name" value="RIBULOSE BISPHOSPHATE CARBOXYLASE SMALL SUBUNIT 1A, CHLOROPLASTIC-RELATED"/>
    <property type="match status" value="1"/>
</dbReference>
<dbReference type="Pfam" id="PF12338">
    <property type="entry name" value="RbcS"/>
    <property type="match status" value="1"/>
</dbReference>
<dbReference type="Pfam" id="PF00101">
    <property type="entry name" value="RuBisCO_small"/>
    <property type="match status" value="1"/>
</dbReference>
<dbReference type="PRINTS" id="PR00152">
    <property type="entry name" value="RUBISCOSMALL"/>
</dbReference>
<dbReference type="SMART" id="SM00961">
    <property type="entry name" value="RuBisCO_small"/>
    <property type="match status" value="1"/>
</dbReference>
<dbReference type="SUPFAM" id="SSF55239">
    <property type="entry name" value="RuBisCO, small subunit"/>
    <property type="match status" value="1"/>
</dbReference>
<keyword id="KW-0113">Calvin cycle</keyword>
<keyword id="KW-0120">Carbon dioxide fixation</keyword>
<keyword id="KW-0150">Chloroplast</keyword>
<keyword id="KW-0601">Photorespiration</keyword>
<keyword id="KW-0602">Photosynthesis</keyword>
<keyword id="KW-0934">Plastid</keyword>
<keyword id="KW-0809">Transit peptide</keyword>
<protein>
    <recommendedName>
        <fullName evidence="1">Ribulose bisphosphate carboxylase small subunit, chloroplastic</fullName>
        <shortName evidence="1">RuBisCO small subunit</shortName>
    </recommendedName>
</protein>
<name>RBS_HORVU</name>
<gene>
    <name evidence="1" type="primary">RBCS</name>
</gene>
<sequence length="174" mass="19420">MAPTVMASSATSVAPFQGLKSTAGLPVSRRSNASSASVSNGGRIRCMQVWPIEGIKKFETLSYLPPLSTEALLKQVDYLIRSKWVPCLEFSKVGFIFREHNASPGYYDGRYWTMWKLPMFGCTDATQVLNEVEEVKKEYPDAYVRIIGFDNMRQVQCVSFIAFKPPGCQESGKA</sequence>
<feature type="transit peptide" description="Chloroplast" evidence="1">
    <location>
        <begin position="1"/>
        <end position="45"/>
    </location>
</feature>
<feature type="chain" id="PRO_0000031509" description="Ribulose bisphosphate carboxylase small subunit, chloroplastic" evidence="1">
    <location>
        <begin position="46"/>
        <end position="174"/>
    </location>
</feature>
<reference key="1">
    <citation type="submission" date="1995-12" db="EMBL/GenBank/DDBJ databases">
        <authorList>
            <person name="Lee J.E."/>
            <person name="Parthier B."/>
            <person name="Loebler M."/>
        </authorList>
    </citation>
    <scope>NUCLEOTIDE SEQUENCE [MRNA]</scope>
    <source>
        <strain>cv. Salome</strain>
        <tissue>Leaf</tissue>
    </source>
</reference>
<evidence type="ECO:0000255" key="1">
    <source>
        <dbReference type="HAMAP-Rule" id="MF_00860"/>
    </source>
</evidence>
<proteinExistence type="evidence at transcript level"/>